<proteinExistence type="inferred from homology"/>
<gene>
    <name type="primary">seld-1</name>
    <name type="ORF">Y45F10A.4</name>
</gene>
<comment type="function">
    <text evidence="2">Synthesizes selenophosphate from selenide and ATP.</text>
</comment>
<comment type="catalytic activity">
    <reaction evidence="2">
        <text>hydrogenselenide + ATP + H2O = selenophosphate + AMP + phosphate + 2 H(+)</text>
        <dbReference type="Rhea" id="RHEA:18737"/>
        <dbReference type="ChEBI" id="CHEBI:15377"/>
        <dbReference type="ChEBI" id="CHEBI:15378"/>
        <dbReference type="ChEBI" id="CHEBI:16144"/>
        <dbReference type="ChEBI" id="CHEBI:29317"/>
        <dbReference type="ChEBI" id="CHEBI:30616"/>
        <dbReference type="ChEBI" id="CHEBI:43474"/>
        <dbReference type="ChEBI" id="CHEBI:456215"/>
        <dbReference type="EC" id="2.7.9.3"/>
    </reaction>
</comment>
<comment type="cofactor">
    <cofactor evidence="2">
        <name>Mg(2+)</name>
        <dbReference type="ChEBI" id="CHEBI:18420"/>
    </cofactor>
    <text evidence="2">Binds 1 Mg(2+) ion per monomer.</text>
</comment>
<comment type="subunit">
    <text evidence="2">Homodimer.</text>
</comment>
<comment type="similarity">
    <text evidence="4">Belongs to the selenophosphate synthase 1 family. Class I subfamily.</text>
</comment>
<protein>
    <recommendedName>
        <fullName>Probable selenide, water dikinase</fullName>
        <ecNumber evidence="2">2.7.9.3</ecNumber>
    </recommendedName>
    <alternativeName>
        <fullName>Selenium donor protein</fullName>
    </alternativeName>
    <alternativeName>
        <fullName>Selenophosphate synthase 1</fullName>
    </alternativeName>
</protein>
<feature type="chain" id="PRO_0000127654" description="Probable selenide, water dikinase">
    <location>
        <begin position="1"/>
        <end position="378"/>
    </location>
</feature>
<feature type="active site" evidence="3">
    <location>
        <position position="33"/>
    </location>
</feature>
<feature type="binding site" description="in other chain" evidence="2">
    <location>
        <position position="36"/>
    </location>
    <ligand>
        <name>ATP</name>
        <dbReference type="ChEBI" id="CHEBI:30616"/>
        <note>ligand shared between dimeric partners</note>
    </ligand>
</feature>
<feature type="binding site" description="in other chain" evidence="2">
    <location>
        <begin position="63"/>
        <end position="65"/>
    </location>
    <ligand>
        <name>ATP</name>
        <dbReference type="ChEBI" id="CHEBI:30616"/>
        <note>ligand shared between dimeric partners</note>
    </ligand>
</feature>
<feature type="binding site" evidence="2">
    <location>
        <position position="65"/>
    </location>
    <ligand>
        <name>Mg(2+)</name>
        <dbReference type="ChEBI" id="CHEBI:18420"/>
    </ligand>
</feature>
<feature type="binding site" description="in other chain" evidence="2">
    <location>
        <position position="83"/>
    </location>
    <ligand>
        <name>ATP</name>
        <dbReference type="ChEBI" id="CHEBI:30616"/>
        <note>ligand shared between dimeric partners</note>
    </ligand>
</feature>
<feature type="binding site" description="in other chain" evidence="2">
    <location>
        <position position="106"/>
    </location>
    <ligand>
        <name>ATP</name>
        <dbReference type="ChEBI" id="CHEBI:30616"/>
        <note>ligand shared between dimeric partners</note>
    </ligand>
</feature>
<feature type="binding site" evidence="2">
    <location>
        <position position="106"/>
    </location>
    <ligand>
        <name>Mg(2+)</name>
        <dbReference type="ChEBI" id="CHEBI:18420"/>
    </ligand>
</feature>
<feature type="binding site" evidence="2">
    <location>
        <begin position="158"/>
        <end position="160"/>
    </location>
    <ligand>
        <name>ATP</name>
        <dbReference type="ChEBI" id="CHEBI:30616"/>
        <note>ligand shared between dimeric partners</note>
    </ligand>
</feature>
<feature type="binding site" evidence="2">
    <location>
        <position position="260"/>
    </location>
    <ligand>
        <name>Mg(2+)</name>
        <dbReference type="ChEBI" id="CHEBI:18420"/>
    </ligand>
</feature>
<feature type="site" description="Important for catalytic activity" evidence="1">
    <location>
        <position position="36"/>
    </location>
</feature>
<sequence>MNRIERILEGFDPVSNGLDEDFVLTKLTGMKGCGCKVPRNVLLQLLQTFKTDLVINNDEVDIGLDSCVIPLRHPGLRLVQTTDFFYPLIDDPYIMGRVTCANVLSDLYAMGVSECDNMLMLLAVAIDLNEKQRDIVVPLFIQGFKDAADEAGTKIRGGQTVRCPWLLLGGVATSVAHESEIIKVDQAVPGDVLILTKPIGGQVAVNSYEWIKKKNGKIEELNLEIPKIEKAFKQVCEQMSRLNRNAAKLLHKYDAHSSTDVTGFGLLGHAENLARVQKQPMEFIIEKLPIIEYMDEIADKMIAKGGEGFKLYQGTSAETSGGLLIAMSEENAKKYIAELSSLDNAPAWIIGKVTAKTTDSSIARILPDAVRISVPSHI</sequence>
<keyword id="KW-0067">ATP-binding</keyword>
<keyword id="KW-0418">Kinase</keyword>
<keyword id="KW-0460">Magnesium</keyword>
<keyword id="KW-0479">Metal-binding</keyword>
<keyword id="KW-0547">Nucleotide-binding</keyword>
<keyword id="KW-1185">Reference proteome</keyword>
<keyword id="KW-0711">Selenium</keyword>
<keyword id="KW-0808">Transferase</keyword>
<evidence type="ECO:0000250" key="1">
    <source>
        <dbReference type="UniProtKB" id="P16456"/>
    </source>
</evidence>
<evidence type="ECO:0000250" key="2">
    <source>
        <dbReference type="UniProtKB" id="P49903"/>
    </source>
</evidence>
<evidence type="ECO:0000255" key="3"/>
<evidence type="ECO:0000305" key="4"/>
<name>SELD_CAEEL</name>
<reference key="1">
    <citation type="journal article" date="1998" name="Science">
        <title>Genome sequence of the nematode C. elegans: a platform for investigating biology.</title>
        <authorList>
            <consortium name="The C. elegans sequencing consortium"/>
        </authorList>
    </citation>
    <scope>NUCLEOTIDE SEQUENCE [LARGE SCALE GENOMIC DNA]</scope>
    <source>
        <strain>Bristol N2</strain>
    </source>
</reference>
<accession>O62461</accession>
<organism>
    <name type="scientific">Caenorhabditis elegans</name>
    <dbReference type="NCBI Taxonomy" id="6239"/>
    <lineage>
        <taxon>Eukaryota</taxon>
        <taxon>Metazoa</taxon>
        <taxon>Ecdysozoa</taxon>
        <taxon>Nematoda</taxon>
        <taxon>Chromadorea</taxon>
        <taxon>Rhabditida</taxon>
        <taxon>Rhabditina</taxon>
        <taxon>Rhabditomorpha</taxon>
        <taxon>Rhabditoidea</taxon>
        <taxon>Rhabditidae</taxon>
        <taxon>Peloderinae</taxon>
        <taxon>Caenorhabditis</taxon>
    </lineage>
</organism>
<dbReference type="EC" id="2.7.9.3" evidence="2"/>
<dbReference type="EMBL" id="AL021488">
    <property type="protein sequence ID" value="CAA16367.2"/>
    <property type="molecule type" value="Genomic_DNA"/>
</dbReference>
<dbReference type="PIR" id="T26910">
    <property type="entry name" value="T26910"/>
</dbReference>
<dbReference type="RefSeq" id="NP_001369794.1">
    <property type="nucleotide sequence ID" value="NM_001383238.2"/>
</dbReference>
<dbReference type="RefSeq" id="NP_502604.1">
    <property type="nucleotide sequence ID" value="NM_070203.1"/>
</dbReference>
<dbReference type="SMR" id="O62461"/>
<dbReference type="BioGRID" id="54526">
    <property type="interactions" value="1"/>
</dbReference>
<dbReference type="FunCoup" id="O62461">
    <property type="interactions" value="1774"/>
</dbReference>
<dbReference type="STRING" id="6239.Y45F10A.4.1"/>
<dbReference type="PaxDb" id="6239-Y45F10A.4"/>
<dbReference type="PeptideAtlas" id="O62461"/>
<dbReference type="EnsemblMetazoa" id="Y45F10A.4.1">
    <property type="protein sequence ID" value="Y45F10A.4.1"/>
    <property type="gene ID" value="WBGene00012867"/>
</dbReference>
<dbReference type="EnsemblMetazoa" id="Y45F10A.4.2">
    <property type="protein sequence ID" value="Y45F10A.4.2"/>
    <property type="gene ID" value="WBGene00012867"/>
</dbReference>
<dbReference type="GeneID" id="189912"/>
<dbReference type="AGR" id="WB:WBGene00012867"/>
<dbReference type="WormBase" id="Y45F10A.4">
    <property type="protein sequence ID" value="CE28704"/>
    <property type="gene ID" value="WBGene00012867"/>
    <property type="gene designation" value="seld-1"/>
</dbReference>
<dbReference type="eggNOG" id="KOG3939">
    <property type="taxonomic scope" value="Eukaryota"/>
</dbReference>
<dbReference type="GeneTree" id="ENSGT00390000000950"/>
<dbReference type="HOGENOM" id="CLU_032859_1_0_1"/>
<dbReference type="InParanoid" id="O62461"/>
<dbReference type="OMA" id="RWNKINM"/>
<dbReference type="OrthoDB" id="409395at2759"/>
<dbReference type="PhylomeDB" id="O62461"/>
<dbReference type="BRENDA" id="2.7.9.3">
    <property type="organism ID" value="1045"/>
</dbReference>
<dbReference type="Reactome" id="R-CEL-2408557">
    <property type="pathway name" value="Selenocysteine synthesis"/>
</dbReference>
<dbReference type="PRO" id="PR:O62461"/>
<dbReference type="Proteomes" id="UP000001940">
    <property type="component" value="Chromosome IV"/>
</dbReference>
<dbReference type="Bgee" id="WBGene00012867">
    <property type="expression patterns" value="Expressed in germ line (C elegans) and 4 other cell types or tissues"/>
</dbReference>
<dbReference type="GO" id="GO:0005737">
    <property type="term" value="C:cytoplasm"/>
    <property type="evidence" value="ECO:0000318"/>
    <property type="project" value="GO_Central"/>
</dbReference>
<dbReference type="GO" id="GO:0005524">
    <property type="term" value="F:ATP binding"/>
    <property type="evidence" value="ECO:0007669"/>
    <property type="project" value="UniProtKB-KW"/>
</dbReference>
<dbReference type="GO" id="GO:0046872">
    <property type="term" value="F:metal ion binding"/>
    <property type="evidence" value="ECO:0007669"/>
    <property type="project" value="UniProtKB-KW"/>
</dbReference>
<dbReference type="GO" id="GO:0004756">
    <property type="term" value="F:selenide, water dikinase activity"/>
    <property type="evidence" value="ECO:0000318"/>
    <property type="project" value="GO_Central"/>
</dbReference>
<dbReference type="GO" id="GO:0016260">
    <property type="term" value="P:selenocysteine biosynthetic process"/>
    <property type="evidence" value="ECO:0000318"/>
    <property type="project" value="GO_Central"/>
</dbReference>
<dbReference type="CDD" id="cd02195">
    <property type="entry name" value="SelD"/>
    <property type="match status" value="1"/>
</dbReference>
<dbReference type="FunFam" id="3.90.650.10:FF:000010">
    <property type="entry name" value="Selenide, water dikinase"/>
    <property type="match status" value="1"/>
</dbReference>
<dbReference type="FunFam" id="3.30.1330.10:FF:000014">
    <property type="entry name" value="Selenophosphate synthetase 2"/>
    <property type="match status" value="1"/>
</dbReference>
<dbReference type="Gene3D" id="3.90.650.10">
    <property type="entry name" value="PurM-like C-terminal domain"/>
    <property type="match status" value="1"/>
</dbReference>
<dbReference type="Gene3D" id="3.30.1330.10">
    <property type="entry name" value="PurM-like, N-terminal domain"/>
    <property type="match status" value="1"/>
</dbReference>
<dbReference type="InterPro" id="IPR010918">
    <property type="entry name" value="PurM-like_C_dom"/>
</dbReference>
<dbReference type="InterPro" id="IPR036676">
    <property type="entry name" value="PurM-like_C_sf"/>
</dbReference>
<dbReference type="InterPro" id="IPR016188">
    <property type="entry name" value="PurM-like_N"/>
</dbReference>
<dbReference type="InterPro" id="IPR036921">
    <property type="entry name" value="PurM-like_N_sf"/>
</dbReference>
<dbReference type="InterPro" id="IPR004536">
    <property type="entry name" value="SPS/SelD"/>
</dbReference>
<dbReference type="NCBIfam" id="TIGR00476">
    <property type="entry name" value="selD"/>
    <property type="match status" value="1"/>
</dbReference>
<dbReference type="PANTHER" id="PTHR10256:SF0">
    <property type="entry name" value="INACTIVE SELENIDE, WATER DIKINASE-LIKE PROTEIN-RELATED"/>
    <property type="match status" value="1"/>
</dbReference>
<dbReference type="PANTHER" id="PTHR10256">
    <property type="entry name" value="SELENIDE, WATER DIKINASE"/>
    <property type="match status" value="1"/>
</dbReference>
<dbReference type="Pfam" id="PF00586">
    <property type="entry name" value="AIRS"/>
    <property type="match status" value="1"/>
</dbReference>
<dbReference type="Pfam" id="PF02769">
    <property type="entry name" value="AIRS_C"/>
    <property type="match status" value="1"/>
</dbReference>
<dbReference type="PIRSF" id="PIRSF036407">
    <property type="entry name" value="Selenphspht_syn"/>
    <property type="match status" value="1"/>
</dbReference>
<dbReference type="SUPFAM" id="SSF56042">
    <property type="entry name" value="PurM C-terminal domain-like"/>
    <property type="match status" value="1"/>
</dbReference>
<dbReference type="SUPFAM" id="SSF55326">
    <property type="entry name" value="PurM N-terminal domain-like"/>
    <property type="match status" value="1"/>
</dbReference>